<organism>
    <name type="scientific">Xenopus laevis</name>
    <name type="common">African clawed frog</name>
    <dbReference type="NCBI Taxonomy" id="8355"/>
    <lineage>
        <taxon>Eukaryota</taxon>
        <taxon>Metazoa</taxon>
        <taxon>Chordata</taxon>
        <taxon>Craniata</taxon>
        <taxon>Vertebrata</taxon>
        <taxon>Euteleostomi</taxon>
        <taxon>Amphibia</taxon>
        <taxon>Batrachia</taxon>
        <taxon>Anura</taxon>
        <taxon>Pipoidea</taxon>
        <taxon>Pipidae</taxon>
        <taxon>Xenopodinae</taxon>
        <taxon>Xenopus</taxon>
        <taxon>Xenopus</taxon>
    </lineage>
</organism>
<gene>
    <name type="primary">gs17</name>
</gene>
<protein>
    <recommendedName>
        <fullName>Gastrula-specific protein 17</fullName>
    </recommendedName>
</protein>
<name>GS17_XENLA</name>
<sequence length="147" mass="16902">MSQNLDFLALAGRGGPHYASPTSRHPSPKVWNSTPPSLERGPSERQISPTPDQYTNPNRRRQPWKDWSPGRWQLLQNQRQSWGLSPTAPTRHKRTPEPKPFFRQPRGGATQVYGNHQPGSYRDISHYYSPSMLEDPWAALQAEAQYR</sequence>
<reference key="1">
    <citation type="journal article" date="1985" name="EMBO J.">
        <title>Developmental regulation of a gastrula-specific gene injected into fertilized Xenopus eggs.</title>
        <authorList>
            <person name="Krieg P.A."/>
            <person name="Melton D.A."/>
        </authorList>
    </citation>
    <scope>NUCLEOTIDE SEQUENCE [MRNA]</scope>
</reference>
<accession>P07733</accession>
<proteinExistence type="evidence at transcript level"/>
<dbReference type="EMBL" id="X05215">
    <property type="protein sequence ID" value="CAA28842.1"/>
    <property type="molecule type" value="mRNA"/>
</dbReference>
<dbReference type="PIR" id="A24580">
    <property type="entry name" value="A24580"/>
</dbReference>
<dbReference type="RefSeq" id="NP_001081533.1">
    <property type="nucleotide sequence ID" value="NM_001088064.1"/>
</dbReference>
<dbReference type="DNASU" id="397898"/>
<dbReference type="GeneID" id="397898"/>
<dbReference type="KEGG" id="xla:397898"/>
<dbReference type="AGR" id="Xenbase:XB-GENE-6252309"/>
<dbReference type="CTD" id="397898"/>
<dbReference type="Xenbase" id="XB-GENE-6252309">
    <property type="gene designation" value="gs17.L"/>
</dbReference>
<dbReference type="OrthoDB" id="9905642at2759"/>
<dbReference type="Proteomes" id="UP000186698">
    <property type="component" value="Chromosome 9_10L"/>
</dbReference>
<dbReference type="Bgee" id="397898">
    <property type="expression patterns" value="Expressed in gastrula and 7 other cell types or tissues"/>
</dbReference>
<dbReference type="InterPro" id="IPR028265">
    <property type="entry name" value="TTDN1/SICKLE"/>
</dbReference>
<dbReference type="Pfam" id="PF15502">
    <property type="entry name" value="MPLKIP"/>
    <property type="match status" value="1"/>
</dbReference>
<evidence type="ECO:0000256" key="1">
    <source>
        <dbReference type="SAM" id="MobiDB-lite"/>
    </source>
</evidence>
<keyword id="KW-0217">Developmental protein</keyword>
<keyword id="KW-1185">Reference proteome</keyword>
<feature type="chain" id="PRO_0000083863" description="Gastrula-specific protein 17">
    <location>
        <begin position="1"/>
        <end position="147"/>
    </location>
</feature>
<feature type="region of interest" description="Disordered" evidence="1">
    <location>
        <begin position="1"/>
        <end position="119"/>
    </location>
</feature>
<feature type="compositionally biased region" description="Polar residues" evidence="1">
    <location>
        <begin position="20"/>
        <end position="36"/>
    </location>
</feature>
<feature type="compositionally biased region" description="Polar residues" evidence="1">
    <location>
        <begin position="45"/>
        <end position="57"/>
    </location>
</feature>
<feature type="compositionally biased region" description="Polar residues" evidence="1">
    <location>
        <begin position="74"/>
        <end position="88"/>
    </location>
</feature>